<gene>
    <name type="primary">Swi5</name>
    <name type="synonym">Sae3</name>
</gene>
<protein>
    <recommendedName>
        <fullName>DNA repair protein SWI5 homolog</fullName>
    </recommendedName>
    <alternativeName>
        <fullName>Protein SAE3 homolog</fullName>
    </alternativeName>
</protein>
<comment type="function">
    <text evidence="1">Component of the SWI5-SFR1 complex, a complex required for double-strand break repair via homologous recombination.</text>
</comment>
<comment type="subunit">
    <text evidence="1">Component of the SWI5-SFR1 complex. Interacts with RAD51 (By similarity).</text>
</comment>
<comment type="subcellular location">
    <subcellularLocation>
        <location evidence="1">Nucleus</location>
    </subcellularLocation>
</comment>
<comment type="similarity">
    <text evidence="3">Belongs to the SWI5/SAE3 family.</text>
</comment>
<accession>Q63ZV7</accession>
<proteinExistence type="inferred from homology"/>
<dbReference type="EMBL" id="BC082799">
    <property type="protein sequence ID" value="AAH82799.1"/>
    <property type="molecule type" value="mRNA"/>
</dbReference>
<dbReference type="RefSeq" id="NP_001233590.1">
    <property type="nucleotide sequence ID" value="NM_001246661.1"/>
</dbReference>
<dbReference type="RefSeq" id="XP_063140421.1">
    <property type="nucleotide sequence ID" value="XM_063284351.1"/>
</dbReference>
<dbReference type="SMR" id="Q63ZV7"/>
<dbReference type="FunCoup" id="Q63ZV7">
    <property type="interactions" value="3"/>
</dbReference>
<dbReference type="STRING" id="10116.ENSRNOP00000029603"/>
<dbReference type="iPTMnet" id="Q63ZV7"/>
<dbReference type="PhosphoSitePlus" id="Q63ZV7"/>
<dbReference type="jPOST" id="Q63ZV7"/>
<dbReference type="PaxDb" id="10116-ENSRNOP00000029603"/>
<dbReference type="GeneID" id="499779"/>
<dbReference type="KEGG" id="rno:499779"/>
<dbReference type="UCSC" id="RGD:1559966">
    <property type="organism name" value="rat"/>
</dbReference>
<dbReference type="AGR" id="RGD:1559966"/>
<dbReference type="CTD" id="375757"/>
<dbReference type="RGD" id="1559966">
    <property type="gene designation" value="Swi5"/>
</dbReference>
<dbReference type="VEuPathDB" id="HostDB:ENSRNOG00000022860"/>
<dbReference type="eggNOG" id="ENOG502S8Z3">
    <property type="taxonomic scope" value="Eukaryota"/>
</dbReference>
<dbReference type="HOGENOM" id="CLU_106110_1_1_1"/>
<dbReference type="InParanoid" id="Q63ZV7"/>
<dbReference type="PhylomeDB" id="Q63ZV7"/>
<dbReference type="TreeFam" id="TF336078"/>
<dbReference type="PRO" id="PR:Q63ZV7"/>
<dbReference type="Proteomes" id="UP000002494">
    <property type="component" value="Chromosome 3"/>
</dbReference>
<dbReference type="Bgee" id="ENSRNOG00000022860">
    <property type="expression patterns" value="Expressed in testis and 20 other cell types or tissues"/>
</dbReference>
<dbReference type="GO" id="GO:0005634">
    <property type="term" value="C:nucleus"/>
    <property type="evidence" value="ECO:0000250"/>
    <property type="project" value="UniProtKB"/>
</dbReference>
<dbReference type="GO" id="GO:0032798">
    <property type="term" value="C:Swi5-Sfr1 complex"/>
    <property type="evidence" value="ECO:0000250"/>
    <property type="project" value="UniProtKB"/>
</dbReference>
<dbReference type="GO" id="GO:0071479">
    <property type="term" value="P:cellular response to ionizing radiation"/>
    <property type="evidence" value="ECO:0000250"/>
    <property type="project" value="UniProtKB"/>
</dbReference>
<dbReference type="GO" id="GO:0000724">
    <property type="term" value="P:double-strand break repair via homologous recombination"/>
    <property type="evidence" value="ECO:0000250"/>
    <property type="project" value="UniProtKB"/>
</dbReference>
<dbReference type="FunFam" id="1.20.5.170:FF:000056">
    <property type="entry name" value="DNA repair protein SWI5 homolog"/>
    <property type="match status" value="1"/>
</dbReference>
<dbReference type="Gene3D" id="1.20.5.170">
    <property type="match status" value="1"/>
</dbReference>
<dbReference type="InterPro" id="IPR010760">
    <property type="entry name" value="DNA-repair_Swi5"/>
</dbReference>
<dbReference type="PANTHER" id="PTHR28529">
    <property type="entry name" value="DNA REPAIR PROTEIN SWI5 HOMOLOG"/>
    <property type="match status" value="1"/>
</dbReference>
<dbReference type="PANTHER" id="PTHR28529:SF2">
    <property type="entry name" value="DNA REPAIR PROTEIN SWI5 HOMOLOG"/>
    <property type="match status" value="1"/>
</dbReference>
<dbReference type="Pfam" id="PF07061">
    <property type="entry name" value="Swi5"/>
    <property type="match status" value="1"/>
</dbReference>
<sequence length="89" mass="10279">MIDEGEEVTEETLNSDIQKLKEKQDMLDKEISQLIAEGYRVIELEQHISLLHEYNDIKDVSQMLLGKLAVTRGVTTKELYPDFDLNPND</sequence>
<reference key="1">
    <citation type="journal article" date="2004" name="Genome Res.">
        <title>The status, quality, and expansion of the NIH full-length cDNA project: the Mammalian Gene Collection (MGC).</title>
        <authorList>
            <consortium name="The MGC Project Team"/>
        </authorList>
    </citation>
    <scope>NUCLEOTIDE SEQUENCE [LARGE SCALE MRNA]</scope>
    <source>
        <tissue>Ovary</tissue>
    </source>
</reference>
<organism>
    <name type="scientific">Rattus norvegicus</name>
    <name type="common">Rat</name>
    <dbReference type="NCBI Taxonomy" id="10116"/>
    <lineage>
        <taxon>Eukaryota</taxon>
        <taxon>Metazoa</taxon>
        <taxon>Chordata</taxon>
        <taxon>Craniata</taxon>
        <taxon>Vertebrata</taxon>
        <taxon>Euteleostomi</taxon>
        <taxon>Mammalia</taxon>
        <taxon>Eutheria</taxon>
        <taxon>Euarchontoglires</taxon>
        <taxon>Glires</taxon>
        <taxon>Rodentia</taxon>
        <taxon>Myomorpha</taxon>
        <taxon>Muroidea</taxon>
        <taxon>Muridae</taxon>
        <taxon>Murinae</taxon>
        <taxon>Rattus</taxon>
    </lineage>
</organism>
<feature type="chain" id="PRO_0000324586" description="DNA repair protein SWI5 homolog">
    <location>
        <begin position="1"/>
        <end position="89"/>
    </location>
</feature>
<feature type="coiled-coil region" evidence="2">
    <location>
        <begin position="7"/>
        <end position="37"/>
    </location>
</feature>
<evidence type="ECO:0000250" key="1"/>
<evidence type="ECO:0000255" key="2"/>
<evidence type="ECO:0000305" key="3"/>
<name>SWI5_RAT</name>
<keyword id="KW-0175">Coiled coil</keyword>
<keyword id="KW-0227">DNA damage</keyword>
<keyword id="KW-0234">DNA repair</keyword>
<keyword id="KW-0539">Nucleus</keyword>
<keyword id="KW-1185">Reference proteome</keyword>